<keyword id="KW-0067">ATP-binding</keyword>
<keyword id="KW-0963">Cytoplasm</keyword>
<keyword id="KW-0436">Ligase</keyword>
<keyword id="KW-0547">Nucleotide-binding</keyword>
<keyword id="KW-0694">RNA-binding</keyword>
<keyword id="KW-0819">tRNA processing</keyword>
<keyword id="KW-0820">tRNA-binding</keyword>
<dbReference type="EC" id="6.3.4.-" evidence="1"/>
<dbReference type="EMBL" id="CP000679">
    <property type="protein sequence ID" value="ABP67381.1"/>
    <property type="molecule type" value="Genomic_DNA"/>
</dbReference>
<dbReference type="RefSeq" id="WP_011917315.1">
    <property type="nucleotide sequence ID" value="NC_009437.1"/>
</dbReference>
<dbReference type="SMR" id="A4XKE6"/>
<dbReference type="STRING" id="351627.Csac_1796"/>
<dbReference type="KEGG" id="csc:Csac_1796"/>
<dbReference type="eggNOG" id="COG1323">
    <property type="taxonomic scope" value="Bacteria"/>
</dbReference>
<dbReference type="HOGENOM" id="CLU_038915_0_1_9"/>
<dbReference type="OrthoDB" id="9769796at2"/>
<dbReference type="Proteomes" id="UP000000256">
    <property type="component" value="Chromosome"/>
</dbReference>
<dbReference type="GO" id="GO:0005737">
    <property type="term" value="C:cytoplasm"/>
    <property type="evidence" value="ECO:0007669"/>
    <property type="project" value="UniProtKB-SubCell"/>
</dbReference>
<dbReference type="GO" id="GO:0005524">
    <property type="term" value="F:ATP binding"/>
    <property type="evidence" value="ECO:0007669"/>
    <property type="project" value="UniProtKB-KW"/>
</dbReference>
<dbReference type="GO" id="GO:0016879">
    <property type="term" value="F:ligase activity, forming carbon-nitrogen bonds"/>
    <property type="evidence" value="ECO:0007669"/>
    <property type="project" value="UniProtKB-UniRule"/>
</dbReference>
<dbReference type="GO" id="GO:0000049">
    <property type="term" value="F:tRNA binding"/>
    <property type="evidence" value="ECO:0007669"/>
    <property type="project" value="UniProtKB-KW"/>
</dbReference>
<dbReference type="GO" id="GO:0006400">
    <property type="term" value="P:tRNA modification"/>
    <property type="evidence" value="ECO:0007669"/>
    <property type="project" value="UniProtKB-UniRule"/>
</dbReference>
<dbReference type="Gene3D" id="3.40.50.620">
    <property type="entry name" value="HUPs"/>
    <property type="match status" value="1"/>
</dbReference>
<dbReference type="HAMAP" id="MF_01539">
    <property type="entry name" value="TmcAL"/>
    <property type="match status" value="1"/>
</dbReference>
<dbReference type="InterPro" id="IPR014729">
    <property type="entry name" value="Rossmann-like_a/b/a_fold"/>
</dbReference>
<dbReference type="InterPro" id="IPR008513">
    <property type="entry name" value="tRNA(Met)_cyd_acetate_ligase"/>
</dbReference>
<dbReference type="NCBIfam" id="NF010191">
    <property type="entry name" value="PRK13670.1"/>
    <property type="match status" value="1"/>
</dbReference>
<dbReference type="NCBIfam" id="NF010192">
    <property type="entry name" value="PRK13671.1"/>
    <property type="match status" value="1"/>
</dbReference>
<dbReference type="PANTHER" id="PTHR37825">
    <property type="entry name" value="TRNA(MET) CYTIDINE ACETATE LIGASE"/>
    <property type="match status" value="1"/>
</dbReference>
<dbReference type="PANTHER" id="PTHR37825:SF1">
    <property type="entry name" value="TRNA(MET) CYTIDINE ACETATE LIGASE"/>
    <property type="match status" value="1"/>
</dbReference>
<dbReference type="Pfam" id="PF05636">
    <property type="entry name" value="HIGH_NTase1"/>
    <property type="match status" value="1"/>
</dbReference>
<dbReference type="SUPFAM" id="SSF52374">
    <property type="entry name" value="Nucleotidylyl transferase"/>
    <property type="match status" value="1"/>
</dbReference>
<accession>A4XKE6</accession>
<proteinExistence type="inferred from homology"/>
<sequence>MKAAGIIVEYNPFHNGHLYHLQKTKEITGADVVVAVMSGNFIQRGEPAIVNKWARTKMALLNGVDVVFELPFAYACNSAEVFAYGAISILNSLGVNWVVFGSEAGDISLLKKIAMHLAFEEDEFKKYLKIYLKEGHSFPKARELALKRVSKEDIEFLPNNILGVEYIKWILRTNSKIEPLTIKRVGSLYNDPNLGSGSFCSATAIRQNINNLELIRDKMPPFSYQVLMEEIESGRGPVSLNDFFEFFLYRAIVYKDFLKEQFDVKEGLENRFYKHIFSSSSLEDLLSKVKTKRYTLTRLQRILIHCLVDSKVNQKTLLSTKPYIRVLGFNSRGKRYLNSIKEKVKYITKLDSYIMKNPEYNSLLELEIRASQIHALKYKEYHKYLQLEFKQHPIYIPSRE</sequence>
<evidence type="ECO:0000255" key="1">
    <source>
        <dbReference type="HAMAP-Rule" id="MF_01539"/>
    </source>
</evidence>
<organism>
    <name type="scientific">Caldicellulosiruptor saccharolyticus (strain ATCC 43494 / DSM 8903 / Tp8T 6331)</name>
    <dbReference type="NCBI Taxonomy" id="351627"/>
    <lineage>
        <taxon>Bacteria</taxon>
        <taxon>Bacillati</taxon>
        <taxon>Bacillota</taxon>
        <taxon>Bacillota incertae sedis</taxon>
        <taxon>Caldicellulosiruptorales</taxon>
        <taxon>Caldicellulosiruptoraceae</taxon>
        <taxon>Caldicellulosiruptor</taxon>
    </lineage>
</organism>
<reference key="1">
    <citation type="submission" date="2007-04" db="EMBL/GenBank/DDBJ databases">
        <title>Genome sequence of the thermophilic hydrogen-producing bacterium Caldicellulosiruptor saccharolyticus DSM 8903.</title>
        <authorList>
            <person name="Copeland A."/>
            <person name="Lucas S."/>
            <person name="Lapidus A."/>
            <person name="Barry K."/>
            <person name="Detter J.C."/>
            <person name="Glavina del Rio T."/>
            <person name="Hammon N."/>
            <person name="Israni S."/>
            <person name="Dalin E."/>
            <person name="Tice H."/>
            <person name="Pitluck S."/>
            <person name="Kiss H."/>
            <person name="Brettin T."/>
            <person name="Bruce D."/>
            <person name="Han C."/>
            <person name="Schmutz J."/>
            <person name="Larimer F."/>
            <person name="Land M."/>
            <person name="Hauser L."/>
            <person name="Kyrpides N."/>
            <person name="Lykidis A."/>
            <person name="van de Werken H.J.G."/>
            <person name="Verhaart M.R.A."/>
            <person name="VanFossen A.L."/>
            <person name="Lewis D.L."/>
            <person name="Nichols J.D."/>
            <person name="Goorissen H.P."/>
            <person name="van Niel E.W.J."/>
            <person name="Stams F.J.M."/>
            <person name="Willquist K.U."/>
            <person name="Ward D.E."/>
            <person name="van der Oost J."/>
            <person name="Kelly R.M."/>
            <person name="Kengen S.M.W."/>
            <person name="Richardson P."/>
        </authorList>
    </citation>
    <scope>NUCLEOTIDE SEQUENCE [LARGE SCALE GENOMIC DNA]</scope>
    <source>
        <strain>ATCC 43494 / DSM 8903 / Tp8T 6331</strain>
    </source>
</reference>
<comment type="function">
    <text evidence="1">Catalyzes the formation of N(4)-acetylcytidine (ac(4)C) at the wobble position of elongator tRNA(Met), using acetate and ATP as substrates. First activates an acetate ion to form acetyladenylate (Ac-AMP) and then transfers the acetyl group to tRNA to form ac(4)C34.</text>
</comment>
<comment type="catalytic activity">
    <reaction evidence="1">
        <text>cytidine(34) in elongator tRNA(Met) + acetate + ATP = N(4)-acetylcytidine(34) in elongator tRNA(Met) + AMP + diphosphate</text>
        <dbReference type="Rhea" id="RHEA:58144"/>
        <dbReference type="Rhea" id="RHEA-COMP:10693"/>
        <dbReference type="Rhea" id="RHEA-COMP:10694"/>
        <dbReference type="ChEBI" id="CHEBI:30089"/>
        <dbReference type="ChEBI" id="CHEBI:30616"/>
        <dbReference type="ChEBI" id="CHEBI:33019"/>
        <dbReference type="ChEBI" id="CHEBI:74900"/>
        <dbReference type="ChEBI" id="CHEBI:82748"/>
        <dbReference type="ChEBI" id="CHEBI:456215"/>
    </reaction>
</comment>
<comment type="subcellular location">
    <subcellularLocation>
        <location evidence="1">Cytoplasm</location>
    </subcellularLocation>
</comment>
<comment type="similarity">
    <text evidence="1">Belongs to the TmcAL family.</text>
</comment>
<gene>
    <name evidence="1" type="primary">tmcAL</name>
    <name type="ordered locus">Csac_1796</name>
</gene>
<protein>
    <recommendedName>
        <fullName evidence="1">tRNA(Met) cytidine acetate ligase</fullName>
        <ecNumber evidence="1">6.3.4.-</ecNumber>
    </recommendedName>
</protein>
<feature type="chain" id="PRO_1000068748" description="tRNA(Met) cytidine acetate ligase">
    <location>
        <begin position="1"/>
        <end position="400"/>
    </location>
</feature>
<feature type="binding site" evidence="1">
    <location>
        <begin position="7"/>
        <end position="20"/>
    </location>
    <ligand>
        <name>ATP</name>
        <dbReference type="ChEBI" id="CHEBI:30616"/>
    </ligand>
</feature>
<feature type="binding site" evidence="1">
    <location>
        <position position="101"/>
    </location>
    <ligand>
        <name>ATP</name>
        <dbReference type="ChEBI" id="CHEBI:30616"/>
    </ligand>
</feature>
<feature type="binding site" evidence="1">
    <location>
        <position position="159"/>
    </location>
    <ligand>
        <name>ATP</name>
        <dbReference type="ChEBI" id="CHEBI:30616"/>
    </ligand>
</feature>
<feature type="binding site" evidence="1">
    <location>
        <position position="184"/>
    </location>
    <ligand>
        <name>ATP</name>
        <dbReference type="ChEBI" id="CHEBI:30616"/>
    </ligand>
</feature>
<name>TMCAL_CALS8</name>